<proteinExistence type="inferred from homology"/>
<geneLocation type="mitochondrion"/>
<organism>
    <name type="scientific">Cervus nippon yesoensis</name>
    <name type="common">Wild sika deer</name>
    <name type="synonym">Hokkaido sika deer</name>
    <dbReference type="NCBI Taxonomy" id="223998"/>
    <lineage>
        <taxon>Eukaryota</taxon>
        <taxon>Metazoa</taxon>
        <taxon>Chordata</taxon>
        <taxon>Craniata</taxon>
        <taxon>Vertebrata</taxon>
        <taxon>Euteleostomi</taxon>
        <taxon>Mammalia</taxon>
        <taxon>Eutheria</taxon>
        <taxon>Laurasiatheria</taxon>
        <taxon>Artiodactyla</taxon>
        <taxon>Ruminantia</taxon>
        <taxon>Pecora</taxon>
        <taxon>Cervidae</taxon>
        <taxon>Cervinae</taxon>
        <taxon>Cervus</taxon>
    </lineage>
</organism>
<accession>Q75R30</accession>
<name>CYB_CERNY</name>
<reference key="1">
    <citation type="submission" date="2004-01" db="EMBL/GenBank/DDBJ databases">
        <title>Determination of mitochondrial DNA sequence in Yeso Sika deer (Cervus nippon yesoensis).</title>
        <authorList>
            <person name="Wada K."/>
            <person name="Yokohama M."/>
        </authorList>
    </citation>
    <scope>NUCLEOTIDE SEQUENCE [GENOMIC DNA]</scope>
    <source>
        <tissue>Liver</tissue>
    </source>
</reference>
<comment type="function">
    <text evidence="2">Component of the ubiquinol-cytochrome c reductase complex (complex III or cytochrome b-c1 complex) that is part of the mitochondrial respiratory chain. The b-c1 complex mediates electron transfer from ubiquinol to cytochrome c. Contributes to the generation of a proton gradient across the mitochondrial membrane that is then used for ATP synthesis.</text>
</comment>
<comment type="cofactor">
    <cofactor evidence="2">
        <name>heme b</name>
        <dbReference type="ChEBI" id="CHEBI:60344"/>
    </cofactor>
    <text evidence="2">Binds 2 heme b groups non-covalently.</text>
</comment>
<comment type="subunit">
    <text evidence="2">The cytochrome bc1 complex contains 11 subunits: 3 respiratory subunits (MT-CYB, CYC1 and UQCRFS1), 2 core proteins (UQCRC1 and UQCRC2) and 6 low-molecular weight proteins (UQCRH/QCR6, UQCRB/QCR7, UQCRQ/QCR8, UQCR10/QCR9, UQCR11/QCR10 and a cleavage product of UQCRFS1). This cytochrome bc1 complex then forms a dimer.</text>
</comment>
<comment type="subcellular location">
    <subcellularLocation>
        <location evidence="2">Mitochondrion inner membrane</location>
        <topology evidence="2">Multi-pass membrane protein</topology>
    </subcellularLocation>
</comment>
<comment type="miscellaneous">
    <text evidence="1">Heme 1 (or BL or b562) is low-potential and absorbs at about 562 nm, and heme 2 (or BH or b566) is high-potential and absorbs at about 566 nm.</text>
</comment>
<comment type="similarity">
    <text evidence="3 4">Belongs to the cytochrome b family.</text>
</comment>
<comment type="caution">
    <text evidence="2">The full-length protein contains only eight transmembrane helices, not nine as predicted by bioinformatics tools.</text>
</comment>
<evidence type="ECO:0000250" key="1"/>
<evidence type="ECO:0000250" key="2">
    <source>
        <dbReference type="UniProtKB" id="P00157"/>
    </source>
</evidence>
<evidence type="ECO:0000255" key="3">
    <source>
        <dbReference type="PROSITE-ProRule" id="PRU00967"/>
    </source>
</evidence>
<evidence type="ECO:0000255" key="4">
    <source>
        <dbReference type="PROSITE-ProRule" id="PRU00968"/>
    </source>
</evidence>
<feature type="chain" id="PRO_0000060766" description="Cytochrome b">
    <location>
        <begin position="1"/>
        <end position="379"/>
    </location>
</feature>
<feature type="transmembrane region" description="Helical" evidence="2">
    <location>
        <begin position="33"/>
        <end position="53"/>
    </location>
</feature>
<feature type="transmembrane region" description="Helical" evidence="2">
    <location>
        <begin position="77"/>
        <end position="98"/>
    </location>
</feature>
<feature type="transmembrane region" description="Helical" evidence="2">
    <location>
        <begin position="113"/>
        <end position="133"/>
    </location>
</feature>
<feature type="transmembrane region" description="Helical" evidence="2">
    <location>
        <begin position="178"/>
        <end position="198"/>
    </location>
</feature>
<feature type="transmembrane region" description="Helical" evidence="2">
    <location>
        <begin position="226"/>
        <end position="246"/>
    </location>
</feature>
<feature type="transmembrane region" description="Helical" evidence="2">
    <location>
        <begin position="288"/>
        <end position="308"/>
    </location>
</feature>
<feature type="transmembrane region" description="Helical" evidence="2">
    <location>
        <begin position="320"/>
        <end position="340"/>
    </location>
</feature>
<feature type="transmembrane region" description="Helical" evidence="2">
    <location>
        <begin position="347"/>
        <end position="367"/>
    </location>
</feature>
<feature type="binding site" description="axial binding residue" evidence="2">
    <location>
        <position position="83"/>
    </location>
    <ligand>
        <name>heme b</name>
        <dbReference type="ChEBI" id="CHEBI:60344"/>
        <label>b562</label>
    </ligand>
    <ligandPart>
        <name>Fe</name>
        <dbReference type="ChEBI" id="CHEBI:18248"/>
    </ligandPart>
</feature>
<feature type="binding site" description="axial binding residue" evidence="2">
    <location>
        <position position="97"/>
    </location>
    <ligand>
        <name>heme b</name>
        <dbReference type="ChEBI" id="CHEBI:60344"/>
        <label>b566</label>
    </ligand>
    <ligandPart>
        <name>Fe</name>
        <dbReference type="ChEBI" id="CHEBI:18248"/>
    </ligandPart>
</feature>
<feature type="binding site" description="axial binding residue" evidence="2">
    <location>
        <position position="182"/>
    </location>
    <ligand>
        <name>heme b</name>
        <dbReference type="ChEBI" id="CHEBI:60344"/>
        <label>b562</label>
    </ligand>
    <ligandPart>
        <name>Fe</name>
        <dbReference type="ChEBI" id="CHEBI:18248"/>
    </ligandPart>
</feature>
<feature type="binding site" description="axial binding residue" evidence="2">
    <location>
        <position position="196"/>
    </location>
    <ligand>
        <name>heme b</name>
        <dbReference type="ChEBI" id="CHEBI:60344"/>
        <label>b566</label>
    </ligand>
    <ligandPart>
        <name>Fe</name>
        <dbReference type="ChEBI" id="CHEBI:18248"/>
    </ligandPart>
</feature>
<feature type="binding site" evidence="2">
    <location>
        <position position="201"/>
    </location>
    <ligand>
        <name>a ubiquinone</name>
        <dbReference type="ChEBI" id="CHEBI:16389"/>
    </ligand>
</feature>
<gene>
    <name type="primary">MT-CYB</name>
    <name type="synonym">COB</name>
    <name type="synonym">CYTB</name>
    <name type="synonym">MTCYB</name>
</gene>
<dbReference type="EMBL" id="AB160860">
    <property type="protein sequence ID" value="BAD08397.1"/>
    <property type="molecule type" value="Genomic_DNA"/>
</dbReference>
<dbReference type="RefSeq" id="YP_227594.1">
    <property type="nucleotide sequence ID" value="NC_006973.1"/>
</dbReference>
<dbReference type="SMR" id="Q75R30"/>
<dbReference type="GeneID" id="3354748"/>
<dbReference type="CTD" id="4519"/>
<dbReference type="GO" id="GO:0005743">
    <property type="term" value="C:mitochondrial inner membrane"/>
    <property type="evidence" value="ECO:0007669"/>
    <property type="project" value="UniProtKB-SubCell"/>
</dbReference>
<dbReference type="GO" id="GO:0045275">
    <property type="term" value="C:respiratory chain complex III"/>
    <property type="evidence" value="ECO:0007669"/>
    <property type="project" value="InterPro"/>
</dbReference>
<dbReference type="GO" id="GO:0046872">
    <property type="term" value="F:metal ion binding"/>
    <property type="evidence" value="ECO:0007669"/>
    <property type="project" value="UniProtKB-KW"/>
</dbReference>
<dbReference type="GO" id="GO:0008121">
    <property type="term" value="F:ubiquinol-cytochrome-c reductase activity"/>
    <property type="evidence" value="ECO:0007669"/>
    <property type="project" value="InterPro"/>
</dbReference>
<dbReference type="GO" id="GO:0006122">
    <property type="term" value="P:mitochondrial electron transport, ubiquinol to cytochrome c"/>
    <property type="evidence" value="ECO:0007669"/>
    <property type="project" value="TreeGrafter"/>
</dbReference>
<dbReference type="CDD" id="cd00290">
    <property type="entry name" value="cytochrome_b_C"/>
    <property type="match status" value="1"/>
</dbReference>
<dbReference type="CDD" id="cd00284">
    <property type="entry name" value="Cytochrome_b_N"/>
    <property type="match status" value="1"/>
</dbReference>
<dbReference type="FunFam" id="1.20.810.10:FF:000002">
    <property type="entry name" value="Cytochrome b"/>
    <property type="match status" value="1"/>
</dbReference>
<dbReference type="Gene3D" id="1.20.810.10">
    <property type="entry name" value="Cytochrome Bc1 Complex, Chain C"/>
    <property type="match status" value="1"/>
</dbReference>
<dbReference type="InterPro" id="IPR005798">
    <property type="entry name" value="Cyt_b/b6_C"/>
</dbReference>
<dbReference type="InterPro" id="IPR036150">
    <property type="entry name" value="Cyt_b/b6_C_sf"/>
</dbReference>
<dbReference type="InterPro" id="IPR005797">
    <property type="entry name" value="Cyt_b/b6_N"/>
</dbReference>
<dbReference type="InterPro" id="IPR027387">
    <property type="entry name" value="Cytb/b6-like_sf"/>
</dbReference>
<dbReference type="InterPro" id="IPR030689">
    <property type="entry name" value="Cytochrome_b"/>
</dbReference>
<dbReference type="InterPro" id="IPR048260">
    <property type="entry name" value="Cytochrome_b_C_euk/bac"/>
</dbReference>
<dbReference type="InterPro" id="IPR048259">
    <property type="entry name" value="Cytochrome_b_N_euk/bac"/>
</dbReference>
<dbReference type="InterPro" id="IPR016174">
    <property type="entry name" value="Di-haem_cyt_TM"/>
</dbReference>
<dbReference type="PANTHER" id="PTHR19271">
    <property type="entry name" value="CYTOCHROME B"/>
    <property type="match status" value="1"/>
</dbReference>
<dbReference type="PANTHER" id="PTHR19271:SF16">
    <property type="entry name" value="CYTOCHROME B"/>
    <property type="match status" value="1"/>
</dbReference>
<dbReference type="Pfam" id="PF00032">
    <property type="entry name" value="Cytochrom_B_C"/>
    <property type="match status" value="1"/>
</dbReference>
<dbReference type="Pfam" id="PF00033">
    <property type="entry name" value="Cytochrome_B"/>
    <property type="match status" value="1"/>
</dbReference>
<dbReference type="PIRSF" id="PIRSF038885">
    <property type="entry name" value="COB"/>
    <property type="match status" value="1"/>
</dbReference>
<dbReference type="SUPFAM" id="SSF81648">
    <property type="entry name" value="a domain/subunit of cytochrome bc1 complex (Ubiquinol-cytochrome c reductase)"/>
    <property type="match status" value="1"/>
</dbReference>
<dbReference type="SUPFAM" id="SSF81342">
    <property type="entry name" value="Transmembrane di-heme cytochromes"/>
    <property type="match status" value="1"/>
</dbReference>
<dbReference type="PROSITE" id="PS51003">
    <property type="entry name" value="CYTB_CTER"/>
    <property type="match status" value="1"/>
</dbReference>
<dbReference type="PROSITE" id="PS51002">
    <property type="entry name" value="CYTB_NTER"/>
    <property type="match status" value="1"/>
</dbReference>
<protein>
    <recommendedName>
        <fullName>Cytochrome b</fullName>
    </recommendedName>
    <alternativeName>
        <fullName>Complex III subunit 3</fullName>
    </alternativeName>
    <alternativeName>
        <fullName>Complex III subunit III</fullName>
    </alternativeName>
    <alternativeName>
        <fullName>Cytochrome b-c1 complex subunit 3</fullName>
    </alternativeName>
    <alternativeName>
        <fullName>Ubiquinol-cytochrome-c reductase complex cytochrome b subunit</fullName>
    </alternativeName>
</protein>
<keyword id="KW-0249">Electron transport</keyword>
<keyword id="KW-0349">Heme</keyword>
<keyword id="KW-0408">Iron</keyword>
<keyword id="KW-0472">Membrane</keyword>
<keyword id="KW-0479">Metal-binding</keyword>
<keyword id="KW-0496">Mitochondrion</keyword>
<keyword id="KW-0999">Mitochondrion inner membrane</keyword>
<keyword id="KW-0679">Respiratory chain</keyword>
<keyword id="KW-0812">Transmembrane</keyword>
<keyword id="KW-1133">Transmembrane helix</keyword>
<keyword id="KW-0813">Transport</keyword>
<keyword id="KW-0830">Ubiquinone</keyword>
<sequence length="379" mass="42865">MTNIRKTHPLMKIVNNAFIDLPAPSNISSWWNFGSLLGICLILQILTGLFLAMHYTSDTMTAFSSVTHICRDVNYGWIIRYMHANGASMFFICLFMHVGRGLYYGSYTFLETWNIGVILLFTVMATAFVGYVLPWGQMSFWGATVITNLLSAIPYIGTNLVEWIWGGFSVDKATLTRFFAFHFILPFIIAALAMVHLLFLHETGSNNPTGIPSDADKIPFHPYYTIKDILGILLLVLFLMLLVLFAPDLLGDPDNYTPANPLNTPPHIKPEWYFLFAYAILRSIPNKLGGVLALVSSILILILMPLLHTSKQRSMMFRPFSQCLFWILVADLLTLTWIGGQPVEYPFIIIGQLASVLYFFIILVLMPITSTIENNLLKW</sequence>